<dbReference type="EMBL" id="DQ897681">
    <property type="protein sequence ID" value="ABI17264.1"/>
    <property type="molecule type" value="Genomic_DNA"/>
</dbReference>
<dbReference type="RefSeq" id="YP_784073.1">
    <property type="nucleotide sequence ID" value="NC_008454.1"/>
</dbReference>
<dbReference type="SMR" id="Q06FV8"/>
<dbReference type="GeneID" id="4362911"/>
<dbReference type="GO" id="GO:0009507">
    <property type="term" value="C:chloroplast"/>
    <property type="evidence" value="ECO:0007669"/>
    <property type="project" value="UniProtKB-SubCell"/>
</dbReference>
<dbReference type="GO" id="GO:0015935">
    <property type="term" value="C:small ribosomal subunit"/>
    <property type="evidence" value="ECO:0007669"/>
    <property type="project" value="InterPro"/>
</dbReference>
<dbReference type="GO" id="GO:0019843">
    <property type="term" value="F:rRNA binding"/>
    <property type="evidence" value="ECO:0007669"/>
    <property type="project" value="UniProtKB-UniRule"/>
</dbReference>
<dbReference type="GO" id="GO:0003735">
    <property type="term" value="F:structural constituent of ribosome"/>
    <property type="evidence" value="ECO:0007669"/>
    <property type="project" value="InterPro"/>
</dbReference>
<dbReference type="GO" id="GO:0042274">
    <property type="term" value="P:ribosomal small subunit biogenesis"/>
    <property type="evidence" value="ECO:0007669"/>
    <property type="project" value="TreeGrafter"/>
</dbReference>
<dbReference type="GO" id="GO:0006412">
    <property type="term" value="P:translation"/>
    <property type="evidence" value="ECO:0007669"/>
    <property type="project" value="UniProtKB-UniRule"/>
</dbReference>
<dbReference type="CDD" id="cd00165">
    <property type="entry name" value="S4"/>
    <property type="match status" value="1"/>
</dbReference>
<dbReference type="FunFam" id="1.10.1050.10:FF:000002">
    <property type="entry name" value="30S ribosomal protein S4, chloroplastic"/>
    <property type="match status" value="1"/>
</dbReference>
<dbReference type="FunFam" id="3.10.290.10:FF:000081">
    <property type="entry name" value="30S ribosomal protein S4, chloroplastic"/>
    <property type="match status" value="1"/>
</dbReference>
<dbReference type="Gene3D" id="1.10.1050.10">
    <property type="entry name" value="Ribosomal Protein S4 Delta 41, Chain A, domain 1"/>
    <property type="match status" value="1"/>
</dbReference>
<dbReference type="Gene3D" id="3.10.290.10">
    <property type="entry name" value="RNA-binding S4 domain"/>
    <property type="match status" value="1"/>
</dbReference>
<dbReference type="HAMAP" id="MF_01306_B">
    <property type="entry name" value="Ribosomal_uS4_B"/>
    <property type="match status" value="1"/>
</dbReference>
<dbReference type="InterPro" id="IPR022801">
    <property type="entry name" value="Ribosomal_uS4"/>
</dbReference>
<dbReference type="InterPro" id="IPR005709">
    <property type="entry name" value="Ribosomal_uS4_bac-type"/>
</dbReference>
<dbReference type="InterPro" id="IPR018079">
    <property type="entry name" value="Ribosomal_uS4_CS"/>
</dbReference>
<dbReference type="InterPro" id="IPR001912">
    <property type="entry name" value="Ribosomal_uS4_N"/>
</dbReference>
<dbReference type="InterPro" id="IPR002942">
    <property type="entry name" value="S4_RNA-bd"/>
</dbReference>
<dbReference type="InterPro" id="IPR036986">
    <property type="entry name" value="S4_RNA-bd_sf"/>
</dbReference>
<dbReference type="NCBIfam" id="NF003717">
    <property type="entry name" value="PRK05327.1"/>
    <property type="match status" value="1"/>
</dbReference>
<dbReference type="NCBIfam" id="TIGR01017">
    <property type="entry name" value="rpsD_bact"/>
    <property type="match status" value="1"/>
</dbReference>
<dbReference type="PANTHER" id="PTHR11831">
    <property type="entry name" value="30S 40S RIBOSOMAL PROTEIN"/>
    <property type="match status" value="1"/>
</dbReference>
<dbReference type="PANTHER" id="PTHR11831:SF4">
    <property type="entry name" value="SMALL RIBOSOMAL SUBUNIT PROTEIN US4M"/>
    <property type="match status" value="1"/>
</dbReference>
<dbReference type="Pfam" id="PF00163">
    <property type="entry name" value="Ribosomal_S4"/>
    <property type="match status" value="1"/>
</dbReference>
<dbReference type="Pfam" id="PF01479">
    <property type="entry name" value="S4"/>
    <property type="match status" value="1"/>
</dbReference>
<dbReference type="SMART" id="SM01390">
    <property type="entry name" value="Ribosomal_S4"/>
    <property type="match status" value="1"/>
</dbReference>
<dbReference type="SMART" id="SM00363">
    <property type="entry name" value="S4"/>
    <property type="match status" value="1"/>
</dbReference>
<dbReference type="SUPFAM" id="SSF55174">
    <property type="entry name" value="Alpha-L RNA-binding motif"/>
    <property type="match status" value="1"/>
</dbReference>
<dbReference type="PROSITE" id="PS00632">
    <property type="entry name" value="RIBOSOMAL_S4"/>
    <property type="match status" value="1"/>
</dbReference>
<dbReference type="PROSITE" id="PS50889">
    <property type="entry name" value="S4"/>
    <property type="match status" value="1"/>
</dbReference>
<accession>Q06FV8</accession>
<sequence>MSRYRGPRVKKIKRLGSLPGLTTKKPPIVVRDPRKLSRPKPKKKSQYRIRLEEKQKLRFHYGLTERQLLKYVRIAGKAKGPTGQVLLQLLEMRLDNTLFRLGMASTIPQARQLVNHRHILVNGRIVDIPSYRCKPRDLISGREKEKSKALIQNYLDSTAKRPIPLPKHLLLFHSDDPRDLLKGSVKKIIDRKEVGLKKIKELLVIEYYSRQISP</sequence>
<gene>
    <name type="primary">rps4</name>
</gene>
<protein>
    <recommendedName>
        <fullName evidence="3">Small ribosomal subunit protein uS4c</fullName>
    </recommendedName>
    <alternativeName>
        <fullName>30S ribosomal protein S4, chloroplastic</fullName>
    </alternativeName>
</protein>
<keyword id="KW-0150">Chloroplast</keyword>
<keyword id="KW-0934">Plastid</keyword>
<keyword id="KW-0687">Ribonucleoprotein</keyword>
<keyword id="KW-0689">Ribosomal protein</keyword>
<keyword id="KW-0694">RNA-binding</keyword>
<keyword id="KW-0699">rRNA-binding</keyword>
<feature type="chain" id="PRO_0000277017" description="Small ribosomal subunit protein uS4c">
    <location>
        <begin position="1"/>
        <end position="214"/>
    </location>
</feature>
<feature type="domain" description="S4 RNA-binding">
    <location>
        <begin position="92"/>
        <end position="153"/>
    </location>
</feature>
<feature type="region of interest" description="Disordered" evidence="2">
    <location>
        <begin position="1"/>
        <end position="46"/>
    </location>
</feature>
<feature type="compositionally biased region" description="Basic residues" evidence="2">
    <location>
        <begin position="1"/>
        <end position="14"/>
    </location>
</feature>
<feature type="compositionally biased region" description="Basic residues" evidence="2">
    <location>
        <begin position="36"/>
        <end position="46"/>
    </location>
</feature>
<comment type="function">
    <text evidence="1">One of the primary rRNA binding proteins, it binds directly to 16S rRNA where it nucleates assembly of the body of the 30S subunit.</text>
</comment>
<comment type="function">
    <text evidence="1">With S5 and S12 plays an important role in translational accuracy.</text>
</comment>
<comment type="subunit">
    <text evidence="1">Part of the 30S ribosomal subunit. Contacts protein S5. The interaction surface between S4 and S5 is involved in control of translational fidelity (By similarity).</text>
</comment>
<comment type="subcellular location">
    <subcellularLocation>
        <location>Plastid</location>
        <location>Chloroplast</location>
    </subcellularLocation>
</comment>
<comment type="similarity">
    <text evidence="3">Belongs to the universal ribosomal protein uS4 family.</text>
</comment>
<geneLocation type="chloroplast"/>
<evidence type="ECO:0000250" key="1"/>
<evidence type="ECO:0000256" key="2">
    <source>
        <dbReference type="SAM" id="MobiDB-lite"/>
    </source>
</evidence>
<evidence type="ECO:0000305" key="3"/>
<reference key="1">
    <citation type="journal article" date="2006" name="Mol. Biol. Evol.">
        <title>The complete chloroplast genome sequence of Pelargonium x hortorum: organization and evolution of the largest and most highly rearranged chloroplast genome of land plants.</title>
        <authorList>
            <person name="Chumley T.W."/>
            <person name="Palmer J.D."/>
            <person name="Mower J.P."/>
            <person name="Fourcade H.M."/>
            <person name="Calie P.J."/>
            <person name="Boore J.L."/>
            <person name="Jansen R.K."/>
        </authorList>
    </citation>
    <scope>NUCLEOTIDE SEQUENCE [LARGE SCALE GENOMIC DNA]</scope>
    <source>
        <strain>cv. Ringo White</strain>
    </source>
</reference>
<name>RR4_PELHO</name>
<organism>
    <name type="scientific">Pelargonium hortorum</name>
    <name type="common">Common geranium</name>
    <name type="synonym">Pelargonium inquinans x Pelargonium zonale</name>
    <dbReference type="NCBI Taxonomy" id="4031"/>
    <lineage>
        <taxon>Eukaryota</taxon>
        <taxon>Viridiplantae</taxon>
        <taxon>Streptophyta</taxon>
        <taxon>Embryophyta</taxon>
        <taxon>Tracheophyta</taxon>
        <taxon>Spermatophyta</taxon>
        <taxon>Magnoliopsida</taxon>
        <taxon>eudicotyledons</taxon>
        <taxon>Gunneridae</taxon>
        <taxon>Pentapetalae</taxon>
        <taxon>rosids</taxon>
        <taxon>malvids</taxon>
        <taxon>Geraniales</taxon>
        <taxon>Geraniaceae</taxon>
        <taxon>Pelargonium</taxon>
    </lineage>
</organism>
<proteinExistence type="inferred from homology"/>